<name>PAPG2_ECOLX</name>
<sequence>MKKWFPALLFSLCVSGESSAWNNIVFYSLGDVNSYQGGNVVITQRPQFITSWRPGIATVTWNQCNGPEFADGFWAYYREYIAWVVFPKKVMTQNGYPLFIEVHNKGSWSEENTGDNDSYFFLKGYKWDERAFDAGNLCQKPGEITRLTEKFDDIIFKVALPADLPLGDYSVKIPYTSGMQRHFASYLGARFKIPYNVAKTLPRENEMLFLFKNIGGCRPSAQSLEIKHGDLSINSANNHYAAQTLSVSCDVPANIRFMLLRNTTPTYSHGKKFSVGLGHGWDSIVSVNGVDTGETTMRWYKAGTQNLTIGSRLYGESSKIQPGVLSGSATLLMILP</sequence>
<evidence type="ECO:0000250" key="1">
    <source>
        <dbReference type="UniProtKB" id="A0A0H2VAQ6"/>
    </source>
</evidence>
<evidence type="ECO:0000250" key="2">
    <source>
        <dbReference type="UniProtKB" id="P13720"/>
    </source>
</evidence>
<evidence type="ECO:0000255" key="3"/>
<evidence type="ECO:0000269" key="4">
    <source>
    </source>
</evidence>
<evidence type="ECO:0000269" key="5">
    <source>
    </source>
</evidence>
<evidence type="ECO:0000269" key="6">
    <source>
    </source>
</evidence>
<evidence type="ECO:0000303" key="7">
    <source>
    </source>
</evidence>
<evidence type="ECO:0000305" key="8"/>
<evidence type="ECO:0007744" key="9">
    <source>
        <dbReference type="PDB" id="1J8R"/>
    </source>
</evidence>
<evidence type="ECO:0007744" key="10">
    <source>
        <dbReference type="PDB" id="1J8S"/>
    </source>
</evidence>
<evidence type="ECO:0007744" key="11">
    <source>
        <dbReference type="PDB" id="6CD2"/>
    </source>
</evidence>
<evidence type="ECO:0007829" key="12">
    <source>
        <dbReference type="PDB" id="1J8R"/>
    </source>
</evidence>
<evidence type="ECO:0007829" key="13">
    <source>
        <dbReference type="PDB" id="1J8S"/>
    </source>
</evidence>
<evidence type="ECO:0007829" key="14">
    <source>
        <dbReference type="PDB" id="3ME0"/>
    </source>
</evidence>
<organism>
    <name type="scientific">Escherichia coli</name>
    <dbReference type="NCBI Taxonomy" id="562"/>
    <lineage>
        <taxon>Bacteria</taxon>
        <taxon>Pseudomonadati</taxon>
        <taxon>Pseudomonadota</taxon>
        <taxon>Gammaproteobacteria</taxon>
        <taxon>Enterobacterales</taxon>
        <taxon>Enterobacteriaceae</taxon>
        <taxon>Escherichia</taxon>
    </lineage>
</organism>
<dbReference type="EMBL" id="M20182">
    <property type="protein sequence ID" value="AAA24296.1"/>
    <property type="molecule type" value="Genomic_DNA"/>
</dbReference>
<dbReference type="PIR" id="H27743">
    <property type="entry name" value="H27743"/>
</dbReference>
<dbReference type="PIR" id="I27743">
    <property type="entry name" value="I27743"/>
</dbReference>
<dbReference type="PDB" id="1J8R">
    <property type="method" value="X-ray"/>
    <property type="resolution" value="1.80 A"/>
    <property type="chains" value="A=21-216"/>
</dbReference>
<dbReference type="PDB" id="1J8S">
    <property type="method" value="X-ray"/>
    <property type="resolution" value="2.10 A"/>
    <property type="chains" value="A=21-216"/>
</dbReference>
<dbReference type="PDB" id="3ME0">
    <property type="method" value="X-ray"/>
    <property type="resolution" value="2.03 A"/>
    <property type="chains" value="B=215-336"/>
</dbReference>
<dbReference type="PDB" id="6CD2">
    <property type="method" value="X-ray"/>
    <property type="resolution" value="3.70 A"/>
    <property type="chains" value="B=21-336"/>
</dbReference>
<dbReference type="PDB" id="7LHG">
    <property type="method" value="EM"/>
    <property type="resolution" value="3.80 A"/>
    <property type="chains" value="G=1-336"/>
</dbReference>
<dbReference type="PDB" id="7LHH">
    <property type="method" value="EM"/>
    <property type="resolution" value="7.20 A"/>
    <property type="chains" value="G=1-336"/>
</dbReference>
<dbReference type="PDB" id="7LHI">
    <property type="method" value="EM"/>
    <property type="resolution" value="7.60 A"/>
    <property type="chains" value="G=1-336"/>
</dbReference>
<dbReference type="PDBsum" id="1J8R"/>
<dbReference type="PDBsum" id="1J8S"/>
<dbReference type="PDBsum" id="3ME0"/>
<dbReference type="PDBsum" id="6CD2"/>
<dbReference type="PDBsum" id="7LHG"/>
<dbReference type="PDBsum" id="7LHH"/>
<dbReference type="PDBsum" id="7LHI"/>
<dbReference type="SMR" id="Q47450"/>
<dbReference type="IntAct" id="Q47450">
    <property type="interactions" value="1"/>
</dbReference>
<dbReference type="UniLectin" id="Q47450"/>
<dbReference type="EvolutionaryTrace" id="Q47450"/>
<dbReference type="GO" id="GO:0005576">
    <property type="term" value="C:extracellular region"/>
    <property type="evidence" value="ECO:0007669"/>
    <property type="project" value="UniProtKB-SubCell"/>
</dbReference>
<dbReference type="GO" id="GO:0009289">
    <property type="term" value="C:pilus"/>
    <property type="evidence" value="ECO:0007669"/>
    <property type="project" value="UniProtKB-SubCell"/>
</dbReference>
<dbReference type="GO" id="GO:0030246">
    <property type="term" value="F:carbohydrate binding"/>
    <property type="evidence" value="ECO:0007669"/>
    <property type="project" value="InterPro"/>
</dbReference>
<dbReference type="GO" id="GO:0007155">
    <property type="term" value="P:cell adhesion"/>
    <property type="evidence" value="ECO:0007669"/>
    <property type="project" value="InterPro"/>
</dbReference>
<dbReference type="CDD" id="cd00239">
    <property type="entry name" value="PapG_CBD"/>
    <property type="match status" value="1"/>
</dbReference>
<dbReference type="Gene3D" id="2.60.40.1370">
    <property type="entry name" value="Bacterial adhesin receptor binding domain"/>
    <property type="match status" value="1"/>
</dbReference>
<dbReference type="Gene3D" id="2.60.40.1090">
    <property type="entry name" value="Fimbrial-type adhesion domain"/>
    <property type="match status" value="1"/>
</dbReference>
<dbReference type="InterPro" id="IPR036937">
    <property type="entry name" value="Adhesion_dom_fimbrial_sf"/>
</dbReference>
<dbReference type="InterPro" id="IPR008966">
    <property type="entry name" value="Adhesion_dom_sf"/>
</dbReference>
<dbReference type="InterPro" id="IPR005310">
    <property type="entry name" value="PapG_carb-bd_N"/>
</dbReference>
<dbReference type="InterPro" id="IPR038420">
    <property type="entry name" value="PapG_carbohydrate-bd_sf"/>
</dbReference>
<dbReference type="InterPro" id="IPR005309">
    <property type="entry name" value="PapG_chaper-bd_C"/>
</dbReference>
<dbReference type="Pfam" id="PF03628">
    <property type="entry name" value="PapG_C"/>
    <property type="match status" value="1"/>
</dbReference>
<dbReference type="Pfam" id="PF03627">
    <property type="entry name" value="PapG_N"/>
    <property type="match status" value="1"/>
</dbReference>
<dbReference type="SUPFAM" id="SSF49401">
    <property type="entry name" value="Bacterial adhesins"/>
    <property type="match status" value="1"/>
</dbReference>
<gene>
    <name evidence="7" type="primary">papGII</name>
</gene>
<comment type="function">
    <text evidence="1 4 6">Tip adhesin component of type P pili that plays a critical role in kidney infection through targeted interaction with the globoseries glycolipids containing the Gal-alpha(1-4)-Gal disaccharide present on uroepithelial cells (PubMed:11440716, PubMed:31361021). In turn, transcriptionally regulates host gene expression in kidney cells, leading to inflammatory pathway activation and renal tissue damage. Acts thereby as key determinant of invasive uropathogenic E.coli (UPEC), which cause pyelonephritis and urinary-source bacteremia (By similarity).</text>
</comment>
<comment type="subcellular location">
    <subcellularLocation>
        <location evidence="2">Secreted</location>
    </subcellularLocation>
    <subcellularLocation>
        <location evidence="2">Fimbrium</location>
    </subcellularLocation>
    <text evidence="2">At the tip of P pili.</text>
</comment>
<comment type="miscellaneous">
    <text>Strains of E.coli that cause infection of the human urinary tract produce pap-pili (P pili) which are hair-like appendages consisting of about 1000 helically arranged subunits of the protein PapA. These pili mediate binding to digalactoside-containing glycolipids present on the epithelial cells which line the urinary tract.</text>
</comment>
<comment type="similarity">
    <text evidence="8">Belongs to the adhesin PapG family.</text>
</comment>
<reference key="1">
    <citation type="journal article" date="1988" name="J. Bacteriol.">
        <title>Structure and antigenic properties of the tip-located P pilus proteins of uropathogenic Escherichia coli.</title>
        <authorList>
            <person name="Lund B."/>
            <person name="Lindberg F."/>
            <person name="Normark S."/>
        </authorList>
    </citation>
    <scope>NUCLEOTIDE SEQUENCE [GENOMIC DNA]</scope>
    <source>
        <strain>AD110 / UPEC</strain>
    </source>
</reference>
<reference key="2">
    <citation type="journal article" date="2019" name="Glycobiology">
        <title>PapG subtype-specific binding characteristics of Escherichia coli towards globo-series glycosphingolipids of human kidney and bladder uroepithelial cells.</title>
        <authorList>
            <person name="Legros N."/>
            <person name="Ptascheck S."/>
            <person name="Pohlentz G."/>
            <person name="Karch H."/>
            <person name="Dobrindt U."/>
            <person name="Muething J."/>
        </authorList>
    </citation>
    <scope>FUNCTION</scope>
</reference>
<reference evidence="9 10" key="3">
    <citation type="journal article" date="2001" name="Cell">
        <title>Structural basis of the interaction of the pyelonephritic E. coli adhesin to its human kidney receptor.</title>
        <authorList>
            <person name="Dodson K.W."/>
            <person name="Pinkner J.S."/>
            <person name="Rose T."/>
            <person name="Magnusson G."/>
            <person name="Hultgren S.J."/>
            <person name="Waksman G."/>
        </authorList>
    </citation>
    <scope>X-RAY CRYSTALLOGRAPHY (1.80 ANGSTROMS) OF 21-216 IN COMPLEX WITH GALACTOSE</scope>
    <scope>DISULFIDE BONDS</scope>
    <scope>FUNCTION</scope>
    <scope>MUTAGENESIS OF TRP-127 AND ARG-190</scope>
</reference>
<reference evidence="11" key="4">
    <citation type="journal article" date="2018" name="Nat. Microbiol.">
        <title>Structural basis for usher activation and intramolecular subunit transfer in P pilus biogenesis in Escherichia coli.</title>
        <authorList>
            <person name="Omattage N.S."/>
            <person name="Deng Z."/>
            <person name="Pinkner J.S."/>
            <person name="Dodson K.W."/>
            <person name="Almqvist F."/>
            <person name="Yuan P."/>
            <person name="Hultgren S.J."/>
        </authorList>
    </citation>
    <scope>X-RAY CRYSTALLOGRAPHY (3.70 ANGSTROMS) OF 21-336</scope>
    <scope>DISULFIDE BONDS</scope>
</reference>
<accession>Q47450</accession>
<keyword id="KW-0002">3D-structure</keyword>
<keyword id="KW-1015">Disulfide bond</keyword>
<keyword id="KW-0281">Fimbrium</keyword>
<keyword id="KW-0964">Secreted</keyword>
<keyword id="KW-0732">Signal</keyword>
<proteinExistence type="evidence at protein level"/>
<feature type="signal peptide" evidence="3">
    <location>
        <begin position="1"/>
        <end position="20"/>
    </location>
</feature>
<feature type="chain" id="PRO_5004233089" description="Fimbrial adhesin PapGII" evidence="3">
    <location>
        <begin position="21"/>
        <end position="336"/>
    </location>
</feature>
<feature type="binding site" evidence="9">
    <location>
        <position position="79"/>
    </location>
    <ligand>
        <name>D-galactose</name>
        <dbReference type="ChEBI" id="CHEBI:4139"/>
    </ligand>
</feature>
<feature type="binding site" evidence="9">
    <location>
        <begin position="124"/>
        <end position="127"/>
    </location>
    <ligand>
        <name>D-galactose</name>
        <dbReference type="ChEBI" id="CHEBI:4139"/>
    </ligand>
</feature>
<feature type="disulfide bond" evidence="5 9 10 11">
    <location>
        <begin position="64"/>
        <end position="138"/>
    </location>
</feature>
<feature type="disulfide bond" evidence="5 11">
    <location>
        <begin position="217"/>
        <end position="249"/>
    </location>
</feature>
<feature type="mutagenesis site" description="Abolished receptor binding activity." evidence="4">
    <original>W</original>
    <variation>A</variation>
    <location>
        <position position="127"/>
    </location>
</feature>
<feature type="mutagenesis site" description="Abolished receptor binding activity." evidence="4">
    <original>R</original>
    <variation>A</variation>
    <location>
        <position position="190"/>
    </location>
</feature>
<feature type="strand" evidence="12">
    <location>
        <begin position="22"/>
        <end position="29"/>
    </location>
</feature>
<feature type="strand" evidence="12">
    <location>
        <begin position="32"/>
        <end position="40"/>
    </location>
</feature>
<feature type="strand" evidence="12">
    <location>
        <begin position="47"/>
        <end position="50"/>
    </location>
</feature>
<feature type="strand" evidence="12">
    <location>
        <begin position="55"/>
        <end position="64"/>
    </location>
</feature>
<feature type="strand" evidence="12">
    <location>
        <begin position="68"/>
        <end position="70"/>
    </location>
</feature>
<feature type="strand" evidence="13">
    <location>
        <begin position="72"/>
        <end position="74"/>
    </location>
</feature>
<feature type="strand" evidence="12">
    <location>
        <begin position="76"/>
        <end position="91"/>
    </location>
</feature>
<feature type="strand" evidence="12">
    <location>
        <begin position="97"/>
        <end position="104"/>
    </location>
</feature>
<feature type="strand" evidence="12">
    <location>
        <begin position="109"/>
        <end position="111"/>
    </location>
</feature>
<feature type="strand" evidence="12">
    <location>
        <begin position="116"/>
        <end position="131"/>
    </location>
</feature>
<feature type="strand" evidence="12">
    <location>
        <begin position="135"/>
        <end position="138"/>
    </location>
</feature>
<feature type="strand" evidence="12">
    <location>
        <begin position="144"/>
        <end position="147"/>
    </location>
</feature>
<feature type="strand" evidence="12">
    <location>
        <begin position="154"/>
        <end position="159"/>
    </location>
</feature>
<feature type="strand" evidence="12">
    <location>
        <begin position="166"/>
        <end position="186"/>
    </location>
</feature>
<feature type="helix" evidence="12">
    <location>
        <begin position="195"/>
        <end position="198"/>
    </location>
</feature>
<feature type="strand" evidence="12">
    <location>
        <begin position="205"/>
        <end position="213"/>
    </location>
</feature>
<feature type="strand" evidence="14">
    <location>
        <begin position="217"/>
        <end position="219"/>
    </location>
</feature>
<feature type="strand" evidence="14">
    <location>
        <begin position="225"/>
        <end position="227"/>
    </location>
</feature>
<feature type="strand" evidence="14">
    <location>
        <begin position="231"/>
        <end position="234"/>
    </location>
</feature>
<feature type="strand" evidence="14">
    <location>
        <begin position="240"/>
        <end position="251"/>
    </location>
</feature>
<feature type="strand" evidence="14">
    <location>
        <begin position="253"/>
        <end position="261"/>
    </location>
</feature>
<feature type="strand" evidence="14">
    <location>
        <begin position="274"/>
        <end position="278"/>
    </location>
</feature>
<feature type="strand" evidence="14">
    <location>
        <begin position="281"/>
        <end position="287"/>
    </location>
</feature>
<feature type="strand" evidence="14">
    <location>
        <begin position="292"/>
        <end position="315"/>
    </location>
</feature>
<feature type="strand" evidence="14">
    <location>
        <begin position="317"/>
        <end position="319"/>
    </location>
</feature>
<feature type="strand" evidence="14">
    <location>
        <begin position="326"/>
        <end position="334"/>
    </location>
</feature>
<protein>
    <recommendedName>
        <fullName evidence="7">Fimbrial adhesin PapGII</fullName>
    </recommendedName>
</protein>